<organism>
    <name type="scientific">Arabidopsis thaliana</name>
    <name type="common">Mouse-ear cress</name>
    <dbReference type="NCBI Taxonomy" id="3702"/>
    <lineage>
        <taxon>Eukaryota</taxon>
        <taxon>Viridiplantae</taxon>
        <taxon>Streptophyta</taxon>
        <taxon>Embryophyta</taxon>
        <taxon>Tracheophyta</taxon>
        <taxon>Spermatophyta</taxon>
        <taxon>Magnoliopsida</taxon>
        <taxon>eudicotyledons</taxon>
        <taxon>Gunneridae</taxon>
        <taxon>Pentapetalae</taxon>
        <taxon>rosids</taxon>
        <taxon>malvids</taxon>
        <taxon>Brassicales</taxon>
        <taxon>Brassicaceae</taxon>
        <taxon>Camelineae</taxon>
        <taxon>Arabidopsis</taxon>
    </lineage>
</organism>
<gene>
    <name type="primary">CRK31</name>
    <name type="ordered locus">At4g11470</name>
    <name type="ORF">F25E4.90</name>
</gene>
<keyword id="KW-0067">ATP-binding</keyword>
<keyword id="KW-0325">Glycoprotein</keyword>
<keyword id="KW-0418">Kinase</keyword>
<keyword id="KW-0472">Membrane</keyword>
<keyword id="KW-0547">Nucleotide-binding</keyword>
<keyword id="KW-0597">Phosphoprotein</keyword>
<keyword id="KW-0675">Receptor</keyword>
<keyword id="KW-1185">Reference proteome</keyword>
<keyword id="KW-0677">Repeat</keyword>
<keyword id="KW-0723">Serine/threonine-protein kinase</keyword>
<keyword id="KW-0732">Signal</keyword>
<keyword id="KW-0808">Transferase</keyword>
<keyword id="KW-0812">Transmembrane</keyword>
<keyword id="KW-1133">Transmembrane helix</keyword>
<sequence length="666" mass="74674">MCLNTLCAILCFVLTVSFGFVSAQKCGESVFFRPNGNYDTNRRLVLSTLASNVSSQNNRFYNVSVGEGAGRIYALGLCIPGSDPRVCSDCIQLASQGLLQTCPNQTDSFYWTGDNADKTLCFVRYSNNSFFNKMALEPTHAVYNTMRFQGNLTAYTRTWDAFMNFMFTRVGQTRYLADISPRINQEPLSPDLIYALMQCIPGISSEDCETCLGKCVDDYQSCCNGFIGGVVNKPVCYFRWDGYKYYGAFGDEAPSQPPTPLPLPPPPPRDPDGKKISTGVIVAIVVSAVIFVVLVALGLVIWKRRQSYKTLKYHTDDDMTSPQSLQFDFTTIEVATDNFSRNNKLGQGGFGEVYKGMLPNETEIAVKRLSSNSGQGTQEFKNEVVIVAKLQHKNLVRLLGFCIERDEQILVYEFVSNKSLDYFLFDPKMKSQLDWKRRYNIIGGVTRGLLYLHQDSRLTIIHRDIKASNILLDADMNPKIADFGMARNFRVDQTEDQTGRVVGTFGYMPPEYVTHGQFSTKSDVYSFGVLILEIVCGKKNSSFFQMDDSGGNLVTHVWRLWNNDSPLDLIDPAIKESYDNDEVIRCIHIGILCVQETPADRPEMSTIFQMLTNSSITLPVPRPPGFFFRNRPNLDPLTYGSEQGQSSSMSVPFSIDSASITRATPR</sequence>
<feature type="signal peptide" evidence="2">
    <location>
        <begin position="1"/>
        <end position="23"/>
    </location>
</feature>
<feature type="chain" id="PRO_0000295078" description="Putative cysteine-rich receptor-like protein kinase 31">
    <location>
        <begin position="24"/>
        <end position="666"/>
    </location>
</feature>
<feature type="topological domain" description="Extracellular" evidence="2">
    <location>
        <begin position="24"/>
        <end position="280"/>
    </location>
</feature>
<feature type="transmembrane region" description="Helical" evidence="2">
    <location>
        <begin position="281"/>
        <end position="301"/>
    </location>
</feature>
<feature type="topological domain" description="Cytoplasmic" evidence="2">
    <location>
        <begin position="302"/>
        <end position="666"/>
    </location>
</feature>
<feature type="domain" description="Gnk2-homologous 1" evidence="4">
    <location>
        <begin position="24"/>
        <end position="130"/>
    </location>
</feature>
<feature type="domain" description="Gnk2-homologous 2" evidence="4">
    <location>
        <begin position="136"/>
        <end position="245"/>
    </location>
</feature>
<feature type="domain" description="Protein kinase" evidence="3">
    <location>
        <begin position="339"/>
        <end position="616"/>
    </location>
</feature>
<feature type="active site" description="Proton acceptor" evidence="3 5">
    <location>
        <position position="464"/>
    </location>
</feature>
<feature type="binding site" evidence="3">
    <location>
        <begin position="345"/>
        <end position="353"/>
    </location>
    <ligand>
        <name>ATP</name>
        <dbReference type="ChEBI" id="CHEBI:30616"/>
    </ligand>
</feature>
<feature type="binding site" evidence="3">
    <location>
        <position position="367"/>
    </location>
    <ligand>
        <name>ATP</name>
        <dbReference type="ChEBI" id="CHEBI:30616"/>
    </ligand>
</feature>
<feature type="modified residue" description="Phosphotyrosine" evidence="1">
    <location>
        <position position="412"/>
    </location>
</feature>
<feature type="modified residue" description="Phosphoserine" evidence="1">
    <location>
        <position position="468"/>
    </location>
</feature>
<feature type="modified residue" description="Phosphothreonine" evidence="1">
    <location>
        <position position="504"/>
    </location>
</feature>
<feature type="modified residue" description="Phosphotyrosine" evidence="1">
    <location>
        <position position="512"/>
    </location>
</feature>
<feature type="glycosylation site" description="N-linked (GlcNAc...) asparagine" evidence="2">
    <location>
        <position position="52"/>
    </location>
</feature>
<feature type="glycosylation site" description="N-linked (GlcNAc...) asparagine" evidence="2">
    <location>
        <position position="62"/>
    </location>
</feature>
<feature type="glycosylation site" description="N-linked (GlcNAc...) asparagine" evidence="2">
    <location>
        <position position="104"/>
    </location>
</feature>
<feature type="glycosylation site" description="N-linked (GlcNAc...) asparagine" evidence="2">
    <location>
        <position position="127"/>
    </location>
</feature>
<feature type="glycosylation site" description="N-linked (GlcNAc...) asparagine" evidence="2">
    <location>
        <position position="151"/>
    </location>
</feature>
<proteinExistence type="inferred from homology"/>
<name>CRK31_ARATH</name>
<comment type="catalytic activity">
    <reaction>
        <text>L-seryl-[protein] + ATP = O-phospho-L-seryl-[protein] + ADP + H(+)</text>
        <dbReference type="Rhea" id="RHEA:17989"/>
        <dbReference type="Rhea" id="RHEA-COMP:9863"/>
        <dbReference type="Rhea" id="RHEA-COMP:11604"/>
        <dbReference type="ChEBI" id="CHEBI:15378"/>
        <dbReference type="ChEBI" id="CHEBI:29999"/>
        <dbReference type="ChEBI" id="CHEBI:30616"/>
        <dbReference type="ChEBI" id="CHEBI:83421"/>
        <dbReference type="ChEBI" id="CHEBI:456216"/>
    </reaction>
</comment>
<comment type="catalytic activity">
    <reaction>
        <text>L-threonyl-[protein] + ATP = O-phospho-L-threonyl-[protein] + ADP + H(+)</text>
        <dbReference type="Rhea" id="RHEA:46608"/>
        <dbReference type="Rhea" id="RHEA-COMP:11060"/>
        <dbReference type="Rhea" id="RHEA-COMP:11605"/>
        <dbReference type="ChEBI" id="CHEBI:15378"/>
        <dbReference type="ChEBI" id="CHEBI:30013"/>
        <dbReference type="ChEBI" id="CHEBI:30616"/>
        <dbReference type="ChEBI" id="CHEBI:61977"/>
        <dbReference type="ChEBI" id="CHEBI:456216"/>
    </reaction>
</comment>
<comment type="subcellular location">
    <subcellularLocation>
        <location evidence="6">Membrane</location>
        <topology evidence="6">Single-pass membrane protein</topology>
    </subcellularLocation>
</comment>
<comment type="similarity">
    <text evidence="3">Belongs to the protein kinase superfamily. Ser/Thr protein kinase family. CRK subfamily.</text>
</comment>
<protein>
    <recommendedName>
        <fullName>Putative cysteine-rich receptor-like protein kinase 31</fullName>
        <shortName>Cysteine-rich RLK31</shortName>
        <ecNumber>2.7.11.-</ecNumber>
    </recommendedName>
</protein>
<accession>Q9LDM5</accession>
<dbReference type="EC" id="2.7.11.-"/>
<dbReference type="EMBL" id="AL050399">
    <property type="protein sequence ID" value="CAB82152.1"/>
    <property type="molecule type" value="Genomic_DNA"/>
</dbReference>
<dbReference type="EMBL" id="AL161532">
    <property type="protein sequence ID" value="CAB78190.1"/>
    <property type="molecule type" value="Genomic_DNA"/>
</dbReference>
<dbReference type="EMBL" id="CP002687">
    <property type="protein sequence ID" value="AEE83015.1"/>
    <property type="molecule type" value="Genomic_DNA"/>
</dbReference>
<dbReference type="PIR" id="T10567">
    <property type="entry name" value="T10567"/>
</dbReference>
<dbReference type="RefSeq" id="NP_192886.1">
    <property type="nucleotide sequence ID" value="NM_117218.2"/>
</dbReference>
<dbReference type="SMR" id="Q9LDM5"/>
<dbReference type="BioGRID" id="12051">
    <property type="interactions" value="10"/>
</dbReference>
<dbReference type="IntAct" id="Q9LDM5">
    <property type="interactions" value="10"/>
</dbReference>
<dbReference type="STRING" id="3702.Q9LDM5"/>
<dbReference type="GlyCosmos" id="Q9LDM5">
    <property type="glycosylation" value="5 sites, No reported glycans"/>
</dbReference>
<dbReference type="GlyGen" id="Q9LDM5">
    <property type="glycosylation" value="5 sites"/>
</dbReference>
<dbReference type="iPTMnet" id="Q9LDM5"/>
<dbReference type="PaxDb" id="3702-AT4G11470.1"/>
<dbReference type="ProteomicsDB" id="224413"/>
<dbReference type="EnsemblPlants" id="AT4G11470.1">
    <property type="protein sequence ID" value="AT4G11470.1"/>
    <property type="gene ID" value="AT4G11470"/>
</dbReference>
<dbReference type="GeneID" id="826752"/>
<dbReference type="Gramene" id="AT4G11470.1">
    <property type="protein sequence ID" value="AT4G11470.1"/>
    <property type="gene ID" value="AT4G11470"/>
</dbReference>
<dbReference type="KEGG" id="ath:AT4G11470"/>
<dbReference type="Araport" id="AT4G11470"/>
<dbReference type="TAIR" id="AT4G11470">
    <property type="gene designation" value="CRK31"/>
</dbReference>
<dbReference type="HOGENOM" id="CLU_000288_35_2_1"/>
<dbReference type="InParanoid" id="Q9LDM5"/>
<dbReference type="PhylomeDB" id="Q9LDM5"/>
<dbReference type="PRO" id="PR:Q9LDM5"/>
<dbReference type="Proteomes" id="UP000006548">
    <property type="component" value="Chromosome 4"/>
</dbReference>
<dbReference type="ExpressionAtlas" id="Q9LDM5">
    <property type="expression patterns" value="baseline and differential"/>
</dbReference>
<dbReference type="GO" id="GO:0016020">
    <property type="term" value="C:membrane"/>
    <property type="evidence" value="ECO:0007669"/>
    <property type="project" value="UniProtKB-SubCell"/>
</dbReference>
<dbReference type="GO" id="GO:0005524">
    <property type="term" value="F:ATP binding"/>
    <property type="evidence" value="ECO:0007669"/>
    <property type="project" value="UniProtKB-KW"/>
</dbReference>
<dbReference type="GO" id="GO:0106310">
    <property type="term" value="F:protein serine kinase activity"/>
    <property type="evidence" value="ECO:0007669"/>
    <property type="project" value="RHEA"/>
</dbReference>
<dbReference type="GO" id="GO:0004674">
    <property type="term" value="F:protein serine/threonine kinase activity"/>
    <property type="evidence" value="ECO:0007669"/>
    <property type="project" value="UniProtKB-KW"/>
</dbReference>
<dbReference type="CDD" id="cd23509">
    <property type="entry name" value="Gnk2-like"/>
    <property type="match status" value="2"/>
</dbReference>
<dbReference type="CDD" id="cd14066">
    <property type="entry name" value="STKc_IRAK"/>
    <property type="match status" value="1"/>
</dbReference>
<dbReference type="FunFam" id="3.30.200.20:FF:000142">
    <property type="entry name" value="Cysteine-rich receptor-like protein kinase 10"/>
    <property type="match status" value="1"/>
</dbReference>
<dbReference type="FunFam" id="1.10.510.10:FF:000129">
    <property type="entry name" value="cysteine-rich receptor-like protein kinase 10"/>
    <property type="match status" value="1"/>
</dbReference>
<dbReference type="FunFam" id="3.30.430.20:FF:000007">
    <property type="entry name" value="Cysteine-rich receptor-like protein kinase 11"/>
    <property type="match status" value="1"/>
</dbReference>
<dbReference type="FunFam" id="3.30.430.20:FF:000003">
    <property type="entry name" value="Cysteine-rich RLK (RECEPTOR-like protein kinase) 10"/>
    <property type="match status" value="1"/>
</dbReference>
<dbReference type="Gene3D" id="3.30.430.20">
    <property type="entry name" value="Gnk2 domain, C-X8-C-X2-C motif"/>
    <property type="match status" value="2"/>
</dbReference>
<dbReference type="Gene3D" id="3.30.200.20">
    <property type="entry name" value="Phosphorylase Kinase, domain 1"/>
    <property type="match status" value="1"/>
</dbReference>
<dbReference type="Gene3D" id="1.10.510.10">
    <property type="entry name" value="Transferase(Phosphotransferase) domain 1"/>
    <property type="match status" value="1"/>
</dbReference>
<dbReference type="InterPro" id="IPR002902">
    <property type="entry name" value="GNK2"/>
</dbReference>
<dbReference type="InterPro" id="IPR038408">
    <property type="entry name" value="GNK2_sf"/>
</dbReference>
<dbReference type="InterPro" id="IPR011009">
    <property type="entry name" value="Kinase-like_dom_sf"/>
</dbReference>
<dbReference type="InterPro" id="IPR000719">
    <property type="entry name" value="Prot_kinase_dom"/>
</dbReference>
<dbReference type="InterPro" id="IPR017441">
    <property type="entry name" value="Protein_kinase_ATP_BS"/>
</dbReference>
<dbReference type="InterPro" id="IPR001245">
    <property type="entry name" value="Ser-Thr/Tyr_kinase_cat_dom"/>
</dbReference>
<dbReference type="InterPro" id="IPR008271">
    <property type="entry name" value="Ser/Thr_kinase_AS"/>
</dbReference>
<dbReference type="PANTHER" id="PTHR27002:SF783">
    <property type="entry name" value="CYSTEINE-RICH RECEPTOR-LIKE PROTEIN KINASE 31-RELATED"/>
    <property type="match status" value="1"/>
</dbReference>
<dbReference type="PANTHER" id="PTHR27002">
    <property type="entry name" value="RECEPTOR-LIKE SERINE/THREONINE-PROTEIN KINASE SD1-8"/>
    <property type="match status" value="1"/>
</dbReference>
<dbReference type="Pfam" id="PF07714">
    <property type="entry name" value="PK_Tyr_Ser-Thr"/>
    <property type="match status" value="1"/>
</dbReference>
<dbReference type="Pfam" id="PF01657">
    <property type="entry name" value="Stress-antifung"/>
    <property type="match status" value="2"/>
</dbReference>
<dbReference type="SMART" id="SM00220">
    <property type="entry name" value="S_TKc"/>
    <property type="match status" value="1"/>
</dbReference>
<dbReference type="SUPFAM" id="SSF56112">
    <property type="entry name" value="Protein kinase-like (PK-like)"/>
    <property type="match status" value="1"/>
</dbReference>
<dbReference type="PROSITE" id="PS51473">
    <property type="entry name" value="GNK2"/>
    <property type="match status" value="2"/>
</dbReference>
<dbReference type="PROSITE" id="PS00107">
    <property type="entry name" value="PROTEIN_KINASE_ATP"/>
    <property type="match status" value="1"/>
</dbReference>
<dbReference type="PROSITE" id="PS50011">
    <property type="entry name" value="PROTEIN_KINASE_DOM"/>
    <property type="match status" value="1"/>
</dbReference>
<dbReference type="PROSITE" id="PS00108">
    <property type="entry name" value="PROTEIN_KINASE_ST"/>
    <property type="match status" value="1"/>
</dbReference>
<evidence type="ECO:0000250" key="1">
    <source>
        <dbReference type="UniProtKB" id="O48814"/>
    </source>
</evidence>
<evidence type="ECO:0000255" key="2"/>
<evidence type="ECO:0000255" key="3">
    <source>
        <dbReference type="PROSITE-ProRule" id="PRU00159"/>
    </source>
</evidence>
<evidence type="ECO:0000255" key="4">
    <source>
        <dbReference type="PROSITE-ProRule" id="PRU00806"/>
    </source>
</evidence>
<evidence type="ECO:0000255" key="5">
    <source>
        <dbReference type="PROSITE-ProRule" id="PRU10027"/>
    </source>
</evidence>
<evidence type="ECO:0000305" key="6"/>
<reference key="1">
    <citation type="journal article" date="1999" name="Nature">
        <title>Sequence and analysis of chromosome 4 of the plant Arabidopsis thaliana.</title>
        <authorList>
            <person name="Mayer K.F.X."/>
            <person name="Schueller C."/>
            <person name="Wambutt R."/>
            <person name="Murphy G."/>
            <person name="Volckaert G."/>
            <person name="Pohl T."/>
            <person name="Duesterhoeft A."/>
            <person name="Stiekema W."/>
            <person name="Entian K.-D."/>
            <person name="Terryn N."/>
            <person name="Harris B."/>
            <person name="Ansorge W."/>
            <person name="Brandt P."/>
            <person name="Grivell L.A."/>
            <person name="Rieger M."/>
            <person name="Weichselgartner M."/>
            <person name="de Simone V."/>
            <person name="Obermaier B."/>
            <person name="Mache R."/>
            <person name="Mueller M."/>
            <person name="Kreis M."/>
            <person name="Delseny M."/>
            <person name="Puigdomenech P."/>
            <person name="Watson M."/>
            <person name="Schmidtheini T."/>
            <person name="Reichert B."/>
            <person name="Portetelle D."/>
            <person name="Perez-Alonso M."/>
            <person name="Boutry M."/>
            <person name="Bancroft I."/>
            <person name="Vos P."/>
            <person name="Hoheisel J."/>
            <person name="Zimmermann W."/>
            <person name="Wedler H."/>
            <person name="Ridley P."/>
            <person name="Langham S.-A."/>
            <person name="McCullagh B."/>
            <person name="Bilham L."/>
            <person name="Robben J."/>
            <person name="van der Schueren J."/>
            <person name="Grymonprez B."/>
            <person name="Chuang Y.-J."/>
            <person name="Vandenbussche F."/>
            <person name="Braeken M."/>
            <person name="Weltjens I."/>
            <person name="Voet M."/>
            <person name="Bastiaens I."/>
            <person name="Aert R."/>
            <person name="Defoor E."/>
            <person name="Weitzenegger T."/>
            <person name="Bothe G."/>
            <person name="Ramsperger U."/>
            <person name="Hilbert H."/>
            <person name="Braun M."/>
            <person name="Holzer E."/>
            <person name="Brandt A."/>
            <person name="Peters S."/>
            <person name="van Staveren M."/>
            <person name="Dirkse W."/>
            <person name="Mooijman P."/>
            <person name="Klein Lankhorst R."/>
            <person name="Rose M."/>
            <person name="Hauf J."/>
            <person name="Koetter P."/>
            <person name="Berneiser S."/>
            <person name="Hempel S."/>
            <person name="Feldpausch M."/>
            <person name="Lamberth S."/>
            <person name="Van den Daele H."/>
            <person name="De Keyser A."/>
            <person name="Buysshaert C."/>
            <person name="Gielen J."/>
            <person name="Villarroel R."/>
            <person name="De Clercq R."/>
            <person name="van Montagu M."/>
            <person name="Rogers J."/>
            <person name="Cronin A."/>
            <person name="Quail M.A."/>
            <person name="Bray-Allen S."/>
            <person name="Clark L."/>
            <person name="Doggett J."/>
            <person name="Hall S."/>
            <person name="Kay M."/>
            <person name="Lennard N."/>
            <person name="McLay K."/>
            <person name="Mayes R."/>
            <person name="Pettett A."/>
            <person name="Rajandream M.A."/>
            <person name="Lyne M."/>
            <person name="Benes V."/>
            <person name="Rechmann S."/>
            <person name="Borkova D."/>
            <person name="Bloecker H."/>
            <person name="Scharfe M."/>
            <person name="Grimm M."/>
            <person name="Loehnert T.-H."/>
            <person name="Dose S."/>
            <person name="de Haan M."/>
            <person name="Maarse A.C."/>
            <person name="Schaefer M."/>
            <person name="Mueller-Auer S."/>
            <person name="Gabel C."/>
            <person name="Fuchs M."/>
            <person name="Fartmann B."/>
            <person name="Granderath K."/>
            <person name="Dauner D."/>
            <person name="Herzl A."/>
            <person name="Neumann S."/>
            <person name="Argiriou A."/>
            <person name="Vitale D."/>
            <person name="Liguori R."/>
            <person name="Piravandi E."/>
            <person name="Massenet O."/>
            <person name="Quigley F."/>
            <person name="Clabauld G."/>
            <person name="Muendlein A."/>
            <person name="Felber R."/>
            <person name="Schnabl S."/>
            <person name="Hiller R."/>
            <person name="Schmidt W."/>
            <person name="Lecharny A."/>
            <person name="Aubourg S."/>
            <person name="Chefdor F."/>
            <person name="Cooke R."/>
            <person name="Berger C."/>
            <person name="Monfort A."/>
            <person name="Casacuberta E."/>
            <person name="Gibbons T."/>
            <person name="Weber N."/>
            <person name="Vandenbol M."/>
            <person name="Bargues M."/>
            <person name="Terol J."/>
            <person name="Torres A."/>
            <person name="Perez-Perez A."/>
            <person name="Purnelle B."/>
            <person name="Bent E."/>
            <person name="Johnson S."/>
            <person name="Tacon D."/>
            <person name="Jesse T."/>
            <person name="Heijnen L."/>
            <person name="Schwarz S."/>
            <person name="Scholler P."/>
            <person name="Heber S."/>
            <person name="Francs P."/>
            <person name="Bielke C."/>
            <person name="Frishman D."/>
            <person name="Haase D."/>
            <person name="Lemcke K."/>
            <person name="Mewes H.-W."/>
            <person name="Stocker S."/>
            <person name="Zaccaria P."/>
            <person name="Bevan M."/>
            <person name="Wilson R.K."/>
            <person name="de la Bastide M."/>
            <person name="Habermann K."/>
            <person name="Parnell L."/>
            <person name="Dedhia N."/>
            <person name="Gnoj L."/>
            <person name="Schutz K."/>
            <person name="Huang E."/>
            <person name="Spiegel L."/>
            <person name="Sekhon M."/>
            <person name="Murray J."/>
            <person name="Sheet P."/>
            <person name="Cordes M."/>
            <person name="Abu-Threideh J."/>
            <person name="Stoneking T."/>
            <person name="Kalicki J."/>
            <person name="Graves T."/>
            <person name="Harmon G."/>
            <person name="Edwards J."/>
            <person name="Latreille P."/>
            <person name="Courtney L."/>
            <person name="Cloud J."/>
            <person name="Abbott A."/>
            <person name="Scott K."/>
            <person name="Johnson D."/>
            <person name="Minx P."/>
            <person name="Bentley D."/>
            <person name="Fulton B."/>
            <person name="Miller N."/>
            <person name="Greco T."/>
            <person name="Kemp K."/>
            <person name="Kramer J."/>
            <person name="Fulton L."/>
            <person name="Mardis E."/>
            <person name="Dante M."/>
            <person name="Pepin K."/>
            <person name="Hillier L.W."/>
            <person name="Nelson J."/>
            <person name="Spieth J."/>
            <person name="Ryan E."/>
            <person name="Andrews S."/>
            <person name="Geisel C."/>
            <person name="Layman D."/>
            <person name="Du H."/>
            <person name="Ali J."/>
            <person name="Berghoff A."/>
            <person name="Jones K."/>
            <person name="Drone K."/>
            <person name="Cotton M."/>
            <person name="Joshu C."/>
            <person name="Antonoiu B."/>
            <person name="Zidanic M."/>
            <person name="Strong C."/>
            <person name="Sun H."/>
            <person name="Lamar B."/>
            <person name="Yordan C."/>
            <person name="Ma P."/>
            <person name="Zhong J."/>
            <person name="Preston R."/>
            <person name="Vil D."/>
            <person name="Shekher M."/>
            <person name="Matero A."/>
            <person name="Shah R."/>
            <person name="Swaby I.K."/>
            <person name="O'Shaughnessy A."/>
            <person name="Rodriguez M."/>
            <person name="Hoffman J."/>
            <person name="Till S."/>
            <person name="Granat S."/>
            <person name="Shohdy N."/>
            <person name="Hasegawa A."/>
            <person name="Hameed A."/>
            <person name="Lodhi M."/>
            <person name="Johnson A."/>
            <person name="Chen E."/>
            <person name="Marra M.A."/>
            <person name="Martienssen R."/>
            <person name="McCombie W.R."/>
        </authorList>
    </citation>
    <scope>NUCLEOTIDE SEQUENCE [LARGE SCALE GENOMIC DNA]</scope>
    <source>
        <strain>cv. Columbia</strain>
    </source>
</reference>
<reference key="2">
    <citation type="journal article" date="2017" name="Plant J.">
        <title>Araport11: a complete reannotation of the Arabidopsis thaliana reference genome.</title>
        <authorList>
            <person name="Cheng C.Y."/>
            <person name="Krishnakumar V."/>
            <person name="Chan A.P."/>
            <person name="Thibaud-Nissen F."/>
            <person name="Schobel S."/>
            <person name="Town C.D."/>
        </authorList>
    </citation>
    <scope>GENOME REANNOTATION</scope>
    <source>
        <strain>cv. Columbia</strain>
    </source>
</reference>
<reference key="3">
    <citation type="journal article" date="2001" name="Plant Physiol.">
        <title>A superfamily of proteins with novel cysteine-rich repeats.</title>
        <authorList>
            <person name="Chen Z."/>
        </authorList>
    </citation>
    <scope>GENE FAMILY ORGANIZATION</scope>
    <scope>NOMENCLATURE</scope>
</reference>